<dbReference type="EMBL" id="CP001336">
    <property type="protein sequence ID" value="ACL18518.1"/>
    <property type="molecule type" value="Genomic_DNA"/>
</dbReference>
<dbReference type="RefSeq" id="WP_011459109.1">
    <property type="nucleotide sequence ID" value="NC_011830.1"/>
</dbReference>
<dbReference type="SMR" id="B8G1Z5"/>
<dbReference type="KEGG" id="dhd:Dhaf_0451"/>
<dbReference type="HOGENOM" id="CLU_074407_2_2_9"/>
<dbReference type="Proteomes" id="UP000007726">
    <property type="component" value="Chromosome"/>
</dbReference>
<dbReference type="GO" id="GO:0022625">
    <property type="term" value="C:cytosolic large ribosomal subunit"/>
    <property type="evidence" value="ECO:0007669"/>
    <property type="project" value="TreeGrafter"/>
</dbReference>
<dbReference type="GO" id="GO:0003735">
    <property type="term" value="F:structural constituent of ribosome"/>
    <property type="evidence" value="ECO:0007669"/>
    <property type="project" value="InterPro"/>
</dbReference>
<dbReference type="GO" id="GO:0006412">
    <property type="term" value="P:translation"/>
    <property type="evidence" value="ECO:0007669"/>
    <property type="project" value="UniProtKB-UniRule"/>
</dbReference>
<dbReference type="FunFam" id="3.90.1030.10:FF:000001">
    <property type="entry name" value="50S ribosomal protein L17"/>
    <property type="match status" value="1"/>
</dbReference>
<dbReference type="Gene3D" id="3.90.1030.10">
    <property type="entry name" value="Ribosomal protein L17"/>
    <property type="match status" value="1"/>
</dbReference>
<dbReference type="HAMAP" id="MF_01368">
    <property type="entry name" value="Ribosomal_bL17"/>
    <property type="match status" value="1"/>
</dbReference>
<dbReference type="InterPro" id="IPR000456">
    <property type="entry name" value="Ribosomal_bL17"/>
</dbReference>
<dbReference type="InterPro" id="IPR047859">
    <property type="entry name" value="Ribosomal_bL17_CS"/>
</dbReference>
<dbReference type="InterPro" id="IPR036373">
    <property type="entry name" value="Ribosomal_bL17_sf"/>
</dbReference>
<dbReference type="NCBIfam" id="TIGR00059">
    <property type="entry name" value="L17"/>
    <property type="match status" value="1"/>
</dbReference>
<dbReference type="PANTHER" id="PTHR14413:SF16">
    <property type="entry name" value="LARGE RIBOSOMAL SUBUNIT PROTEIN BL17M"/>
    <property type="match status" value="1"/>
</dbReference>
<dbReference type="PANTHER" id="PTHR14413">
    <property type="entry name" value="RIBOSOMAL PROTEIN L17"/>
    <property type="match status" value="1"/>
</dbReference>
<dbReference type="Pfam" id="PF01196">
    <property type="entry name" value="Ribosomal_L17"/>
    <property type="match status" value="1"/>
</dbReference>
<dbReference type="SUPFAM" id="SSF64263">
    <property type="entry name" value="Prokaryotic ribosomal protein L17"/>
    <property type="match status" value="1"/>
</dbReference>
<dbReference type="PROSITE" id="PS01167">
    <property type="entry name" value="RIBOSOMAL_L17"/>
    <property type="match status" value="1"/>
</dbReference>
<feature type="chain" id="PRO_1000184019" description="Large ribosomal subunit protein bL17">
    <location>
        <begin position="1"/>
        <end position="112"/>
    </location>
</feature>
<accession>B8G1Z5</accession>
<protein>
    <recommendedName>
        <fullName evidence="1">Large ribosomal subunit protein bL17</fullName>
    </recommendedName>
    <alternativeName>
        <fullName evidence="2">50S ribosomal protein L17</fullName>
    </alternativeName>
</protein>
<sequence length="112" mass="12540">MAYRKLGRNTGHRGSMLRNLATSLLKHERIQTTEARAKEVNAIAEKMITLGKQGDLAARRNALTYLLEEDVVTKLFTEIAPKYADRQGGYTRVIKVGPRRGDAAEMVLIELV</sequence>
<proteinExistence type="inferred from homology"/>
<organism>
    <name type="scientific">Desulfitobacterium hafniense (strain DSM 10664 / DCB-2)</name>
    <dbReference type="NCBI Taxonomy" id="272564"/>
    <lineage>
        <taxon>Bacteria</taxon>
        <taxon>Bacillati</taxon>
        <taxon>Bacillota</taxon>
        <taxon>Clostridia</taxon>
        <taxon>Eubacteriales</taxon>
        <taxon>Desulfitobacteriaceae</taxon>
        <taxon>Desulfitobacterium</taxon>
    </lineage>
</organism>
<gene>
    <name evidence="1" type="primary">rplQ</name>
    <name type="ordered locus">Dhaf_0451</name>
</gene>
<keyword id="KW-0687">Ribonucleoprotein</keyword>
<keyword id="KW-0689">Ribosomal protein</keyword>
<reference key="1">
    <citation type="journal article" date="2012" name="BMC Microbiol.">
        <title>Genome sequence of Desulfitobacterium hafniense DCB-2, a Gram-positive anaerobe capable of dehalogenation and metal reduction.</title>
        <authorList>
            <person name="Kim S.H."/>
            <person name="Harzman C."/>
            <person name="Davis J.K."/>
            <person name="Hutcheson R."/>
            <person name="Broderick J.B."/>
            <person name="Marsh T.L."/>
            <person name="Tiedje J.M."/>
        </authorList>
    </citation>
    <scope>NUCLEOTIDE SEQUENCE [LARGE SCALE GENOMIC DNA]</scope>
    <source>
        <strain>DSM 10664 / DCB-2</strain>
    </source>
</reference>
<comment type="subunit">
    <text evidence="1">Part of the 50S ribosomal subunit. Contacts protein L32.</text>
</comment>
<comment type="similarity">
    <text evidence="1">Belongs to the bacterial ribosomal protein bL17 family.</text>
</comment>
<evidence type="ECO:0000255" key="1">
    <source>
        <dbReference type="HAMAP-Rule" id="MF_01368"/>
    </source>
</evidence>
<evidence type="ECO:0000305" key="2"/>
<name>RL17_DESHD</name>